<reference key="1">
    <citation type="journal article" date="2006" name="J. Virol.">
        <title>Genome of invertebrate iridescent virus type 3 (mosquito iridescent virus).</title>
        <authorList>
            <person name="Delhon G."/>
            <person name="Tulman E.R."/>
            <person name="Afonso C.L."/>
            <person name="Lu Z."/>
            <person name="Becnel J.J."/>
            <person name="Moser B.A."/>
            <person name="Kutish G.F."/>
            <person name="Rock D.L."/>
        </authorList>
    </citation>
    <scope>NUCLEOTIDE SEQUENCE [LARGE SCALE GENOMIC DNA]</scope>
</reference>
<proteinExistence type="inferred from homology"/>
<evidence type="ECO:0000305" key="1"/>
<comment type="similarity">
    <text evidence="1">Belongs to the IIV-6 050L family.</text>
</comment>
<accession>Q196W6</accession>
<dbReference type="EMBL" id="DQ643392">
    <property type="protein sequence ID" value="ABF82124.1"/>
    <property type="molecule type" value="Genomic_DNA"/>
</dbReference>
<dbReference type="RefSeq" id="YP_654666.1">
    <property type="nucleotide sequence ID" value="NC_008187.1"/>
</dbReference>
<dbReference type="SMR" id="Q196W6"/>
<dbReference type="KEGG" id="vg:4156238"/>
<dbReference type="OrthoDB" id="7810at10239"/>
<dbReference type="Proteomes" id="UP000001358">
    <property type="component" value="Genome"/>
</dbReference>
<dbReference type="Gene3D" id="3.40.50.300">
    <property type="entry name" value="P-loop containing nucleotide triphosphate hydrolases"/>
    <property type="match status" value="2"/>
</dbReference>
<dbReference type="InterPro" id="IPR027417">
    <property type="entry name" value="P-loop_NTPase"/>
</dbReference>
<dbReference type="InterPro" id="IPR003395">
    <property type="entry name" value="RecF/RecN/SMC_N"/>
</dbReference>
<dbReference type="PANTHER" id="PTHR32114">
    <property type="entry name" value="ABC TRANSPORTER ABCH.3"/>
    <property type="match status" value="1"/>
</dbReference>
<dbReference type="PANTHER" id="PTHR32114:SF2">
    <property type="entry name" value="ABC TRANSPORTER ABCH.3"/>
    <property type="match status" value="1"/>
</dbReference>
<dbReference type="Pfam" id="PF02463">
    <property type="entry name" value="SMC_N"/>
    <property type="match status" value="1"/>
</dbReference>
<dbReference type="SUPFAM" id="SSF52540">
    <property type="entry name" value="P-loop containing nucleoside triphosphate hydrolases"/>
    <property type="match status" value="1"/>
</dbReference>
<gene>
    <name type="ORF">IIV3-094L</name>
</gene>
<organism>
    <name type="scientific">Invertebrate iridescent virus 3</name>
    <name type="common">IIV-3</name>
    <name type="synonym">Mosquito iridescent virus</name>
    <dbReference type="NCBI Taxonomy" id="345201"/>
    <lineage>
        <taxon>Viruses</taxon>
        <taxon>Varidnaviria</taxon>
        <taxon>Bamfordvirae</taxon>
        <taxon>Nucleocytoviricota</taxon>
        <taxon>Megaviricetes</taxon>
        <taxon>Pimascovirales</taxon>
        <taxon>Iridoviridae</taxon>
        <taxon>Betairidovirinae</taxon>
        <taxon>Chloriridovirus</taxon>
    </lineage>
</organism>
<keyword id="KW-1185">Reference proteome</keyword>
<name>VF050_IIV3</name>
<organismHost>
    <name type="scientific">Aedes vexans</name>
    <name type="common">Inland floodwater mosquito</name>
    <name type="synonym">Culex vexans</name>
    <dbReference type="NCBI Taxonomy" id="7163"/>
</organismHost>
<organismHost>
    <name type="scientific">Culex territans</name>
    <dbReference type="NCBI Taxonomy" id="42431"/>
</organismHost>
<organismHost>
    <name type="scientific">Culiseta annulata</name>
    <dbReference type="NCBI Taxonomy" id="332058"/>
</organismHost>
<organismHost>
    <name type="scientific">Ochlerotatus sollicitans</name>
    <name type="common">eastern saltmarsh mosquito</name>
    <dbReference type="NCBI Taxonomy" id="310513"/>
</organismHost>
<organismHost>
    <name type="scientific">Ochlerotatus taeniorhynchus</name>
    <name type="common">Black salt marsh mosquito</name>
    <name type="synonym">Aedes taeniorhynchus</name>
    <dbReference type="NCBI Taxonomy" id="329105"/>
</organismHost>
<organismHost>
    <name type="scientific">Psorophora ferox</name>
    <dbReference type="NCBI Taxonomy" id="7183"/>
</organismHost>
<sequence>MKLTLKNFKCYTSATFNFALDSTTLITGPSGQGKSTILLAVQFALFGMTGHRYVISHNKSSCEVVLEYRDFWIKRTKRPNVLLVRWKGQAYQDDEAQVVLHRWFGTTANCSTFFLDLSHVEKMEFLERIANATYNVGELKARVKAHLSTLSRDLAVLDGQIATSNEMAAFVEKPDPIPEPNRDLVEESLRDATQEQVEEVRRQTLRLRSCEVEKSNKHATLQAQRGEIEHELRLLGPANDTVATQIATLEESVARLKAQADQLQADKEARILMEDQSSRLTQYDSVSEAAVSERVERVEQLNRAIADAVTMEQLWELDREQQTAARLLEQERHEWRERLDQAQVELDHIAAELGPDQDGCPEVEQRCHEYWHAKSFNSDHNLPQLKEEMVQIRARLYKPICCTQCHHKMLVNMATWEVKDGDDGPICATTGSGEKGRLQADRKRLQQLETLMGQINHNEAVMASTPIDELTARLQLYRDRETVRERIRQMQTFQPSASLAALEHKIKTNVHFKRKSKSTIALVPLLESVESLRERKCTAVVQLDLMKQQLAAKDKLERQLAHYPSSVVHYSEEAHRSSLDELEVCVGQLADKRLEADRVRTIRRLEAKRAKLQTKLDELNHCPEDLTRHESKLREVNVALEYWARVTEYQSYCARLDKWNQFHASLRDARDRRERMEKQYRTTVTFSRMVCEAEHESLQCVVSVVNSHLEILLQDFFPDCCGDPIQIQLELCHDKQRPQVSATINYKGNRVDYKSLSTGEYARVKLAFDLTFKEILGETIIMLDECTANLDQDLSTKIFQKIISTFPSKTILVVAHQAVAGIFNHVLTL</sequence>
<feature type="chain" id="PRO_0000377758" description="Uncharacterized protein 094L">
    <location>
        <begin position="1"/>
        <end position="829"/>
    </location>
</feature>
<protein>
    <recommendedName>
        <fullName>Uncharacterized protein 094L</fullName>
    </recommendedName>
</protein>